<dbReference type="EMBL" id="CR954246">
    <property type="protein sequence ID" value="CAI87852.1"/>
    <property type="molecule type" value="Genomic_DNA"/>
</dbReference>
<dbReference type="SMR" id="Q3IJK0"/>
<dbReference type="STRING" id="326442.PSHAa2815"/>
<dbReference type="KEGG" id="pha:PSHAa2815"/>
<dbReference type="eggNOG" id="COG0097">
    <property type="taxonomic scope" value="Bacteria"/>
</dbReference>
<dbReference type="HOGENOM" id="CLU_065464_1_2_6"/>
<dbReference type="BioCyc" id="PHAL326442:PSHA_RS13820-MONOMER"/>
<dbReference type="Proteomes" id="UP000006843">
    <property type="component" value="Chromosome I"/>
</dbReference>
<dbReference type="GO" id="GO:0022625">
    <property type="term" value="C:cytosolic large ribosomal subunit"/>
    <property type="evidence" value="ECO:0007669"/>
    <property type="project" value="TreeGrafter"/>
</dbReference>
<dbReference type="GO" id="GO:0019843">
    <property type="term" value="F:rRNA binding"/>
    <property type="evidence" value="ECO:0007669"/>
    <property type="project" value="UniProtKB-UniRule"/>
</dbReference>
<dbReference type="GO" id="GO:0003735">
    <property type="term" value="F:structural constituent of ribosome"/>
    <property type="evidence" value="ECO:0007669"/>
    <property type="project" value="InterPro"/>
</dbReference>
<dbReference type="GO" id="GO:0002181">
    <property type="term" value="P:cytoplasmic translation"/>
    <property type="evidence" value="ECO:0007669"/>
    <property type="project" value="TreeGrafter"/>
</dbReference>
<dbReference type="FunFam" id="3.90.930.12:FF:000001">
    <property type="entry name" value="50S ribosomal protein L6"/>
    <property type="match status" value="1"/>
</dbReference>
<dbReference type="FunFam" id="3.90.930.12:FF:000002">
    <property type="entry name" value="50S ribosomal protein L6"/>
    <property type="match status" value="1"/>
</dbReference>
<dbReference type="Gene3D" id="3.90.930.12">
    <property type="entry name" value="Ribosomal protein L6, alpha-beta domain"/>
    <property type="match status" value="2"/>
</dbReference>
<dbReference type="HAMAP" id="MF_01365_B">
    <property type="entry name" value="Ribosomal_uL6_B"/>
    <property type="match status" value="1"/>
</dbReference>
<dbReference type="InterPro" id="IPR000702">
    <property type="entry name" value="Ribosomal_uL6-like"/>
</dbReference>
<dbReference type="InterPro" id="IPR036789">
    <property type="entry name" value="Ribosomal_uL6-like_a/b-dom_sf"/>
</dbReference>
<dbReference type="InterPro" id="IPR020040">
    <property type="entry name" value="Ribosomal_uL6_a/b-dom"/>
</dbReference>
<dbReference type="InterPro" id="IPR019906">
    <property type="entry name" value="Ribosomal_uL6_bac-type"/>
</dbReference>
<dbReference type="InterPro" id="IPR002358">
    <property type="entry name" value="Ribosomal_uL6_CS"/>
</dbReference>
<dbReference type="NCBIfam" id="TIGR03654">
    <property type="entry name" value="L6_bact"/>
    <property type="match status" value="1"/>
</dbReference>
<dbReference type="PANTHER" id="PTHR11655">
    <property type="entry name" value="60S/50S RIBOSOMAL PROTEIN L6/L9"/>
    <property type="match status" value="1"/>
</dbReference>
<dbReference type="PANTHER" id="PTHR11655:SF14">
    <property type="entry name" value="LARGE RIBOSOMAL SUBUNIT PROTEIN UL6M"/>
    <property type="match status" value="1"/>
</dbReference>
<dbReference type="Pfam" id="PF00347">
    <property type="entry name" value="Ribosomal_L6"/>
    <property type="match status" value="2"/>
</dbReference>
<dbReference type="PIRSF" id="PIRSF002162">
    <property type="entry name" value="Ribosomal_L6"/>
    <property type="match status" value="1"/>
</dbReference>
<dbReference type="PRINTS" id="PR00059">
    <property type="entry name" value="RIBOSOMALL6"/>
</dbReference>
<dbReference type="SUPFAM" id="SSF56053">
    <property type="entry name" value="Ribosomal protein L6"/>
    <property type="match status" value="2"/>
</dbReference>
<dbReference type="PROSITE" id="PS00525">
    <property type="entry name" value="RIBOSOMAL_L6_1"/>
    <property type="match status" value="1"/>
</dbReference>
<keyword id="KW-1185">Reference proteome</keyword>
<keyword id="KW-0687">Ribonucleoprotein</keyword>
<keyword id="KW-0689">Ribosomal protein</keyword>
<keyword id="KW-0694">RNA-binding</keyword>
<keyword id="KW-0699">rRNA-binding</keyword>
<name>RL6_PSET1</name>
<proteinExistence type="inferred from homology"/>
<organism>
    <name type="scientific">Pseudoalteromonas translucida (strain TAC 125)</name>
    <dbReference type="NCBI Taxonomy" id="326442"/>
    <lineage>
        <taxon>Bacteria</taxon>
        <taxon>Pseudomonadati</taxon>
        <taxon>Pseudomonadota</taxon>
        <taxon>Gammaproteobacteria</taxon>
        <taxon>Alteromonadales</taxon>
        <taxon>Pseudoalteromonadaceae</taxon>
        <taxon>Pseudoalteromonas</taxon>
    </lineage>
</organism>
<accession>Q3IJK0</accession>
<protein>
    <recommendedName>
        <fullName evidence="1">Large ribosomal subunit protein uL6</fullName>
    </recommendedName>
    <alternativeName>
        <fullName evidence="3">50S ribosomal protein L6</fullName>
    </alternativeName>
</protein>
<gene>
    <name evidence="1" type="primary">rplF</name>
    <name type="ordered locus">PSHAa2815</name>
</gene>
<comment type="function">
    <text evidence="1">This protein binds to the 23S rRNA, and is important in its secondary structure. It is located near the subunit interface in the base of the L7/L12 stalk, and near the tRNA binding site of the peptidyltransferase center.</text>
</comment>
<comment type="subunit">
    <text evidence="1">Part of the 50S ribosomal subunit.</text>
</comment>
<comment type="similarity">
    <text evidence="1">Belongs to the universal ribosomal protein uL6 family.</text>
</comment>
<feature type="chain" id="PRO_0000260918" description="Large ribosomal subunit protein uL6">
    <location>
        <begin position="1"/>
        <end position="177"/>
    </location>
</feature>
<feature type="region of interest" description="Disordered" evidence="2">
    <location>
        <begin position="157"/>
        <end position="177"/>
    </location>
</feature>
<feature type="compositionally biased region" description="Basic and acidic residues" evidence="2">
    <location>
        <begin position="157"/>
        <end position="171"/>
    </location>
</feature>
<evidence type="ECO:0000255" key="1">
    <source>
        <dbReference type="HAMAP-Rule" id="MF_01365"/>
    </source>
</evidence>
<evidence type="ECO:0000256" key="2">
    <source>
        <dbReference type="SAM" id="MobiDB-lite"/>
    </source>
</evidence>
<evidence type="ECO:0000305" key="3"/>
<reference key="1">
    <citation type="journal article" date="2005" name="Genome Res.">
        <title>Coping with cold: the genome of the versatile marine Antarctica bacterium Pseudoalteromonas haloplanktis TAC125.</title>
        <authorList>
            <person name="Medigue C."/>
            <person name="Krin E."/>
            <person name="Pascal G."/>
            <person name="Barbe V."/>
            <person name="Bernsel A."/>
            <person name="Bertin P.N."/>
            <person name="Cheung F."/>
            <person name="Cruveiller S."/>
            <person name="D'Amico S."/>
            <person name="Duilio A."/>
            <person name="Fang G."/>
            <person name="Feller G."/>
            <person name="Ho C."/>
            <person name="Mangenot S."/>
            <person name="Marino G."/>
            <person name="Nilsson J."/>
            <person name="Parrilli E."/>
            <person name="Rocha E.P.C."/>
            <person name="Rouy Z."/>
            <person name="Sekowska A."/>
            <person name="Tutino M.L."/>
            <person name="Vallenet D."/>
            <person name="von Heijne G."/>
            <person name="Danchin A."/>
        </authorList>
    </citation>
    <scope>NUCLEOTIDE SEQUENCE [LARGE SCALE GENOMIC DNA]</scope>
    <source>
        <strain>TAC 125</strain>
    </source>
</reference>
<sequence>MSRIAKAPISVPAGVEVTLKGQEITVKGKNGELTRTINNAVEVKVEENVITTLPREGVTDAWAQAGTARALINNMIVGTHEGYEKKLQLVGVGYRAAAKGKTLDLTLGFSHPVHFAVPEGITIETPSQTEVLVKGVDKQLVGQTAANIRAYRKPEPYKGKGVRYSDENVRRKEAKKK</sequence>